<comment type="function">
    <text>FixJ, when activated by FixL, induces the expression of both nifA, required for activation of classical nif and fix genes, and fixK, required for FixN activation.</text>
</comment>
<comment type="cofactor">
    <cofactor>
        <name>Mg(2+)</name>
        <dbReference type="ChEBI" id="CHEBI:18420"/>
    </cofactor>
    <text>Binds 1 Mg(2+) ion per subunit.</text>
</comment>
<comment type="subcellular location">
    <subcellularLocation>
        <location evidence="3">Cytoplasm</location>
    </subcellularLocation>
</comment>
<comment type="PTM">
    <text>Phosphorylated by FixL.</text>
</comment>
<keyword id="KW-0002">3D-structure</keyword>
<keyword id="KW-0010">Activator</keyword>
<keyword id="KW-0963">Cytoplasm</keyword>
<keyword id="KW-0238">DNA-binding</keyword>
<keyword id="KW-0460">Magnesium</keyword>
<keyword id="KW-0479">Metal-binding</keyword>
<keyword id="KW-0535">Nitrogen fixation</keyword>
<keyword id="KW-0597">Phosphoprotein</keyword>
<keyword id="KW-0614">Plasmid</keyword>
<keyword id="KW-1185">Reference proteome</keyword>
<keyword id="KW-0804">Transcription</keyword>
<keyword id="KW-0805">Transcription regulation</keyword>
<keyword id="KW-0902">Two-component regulatory system</keyword>
<gene>
    <name type="primary">fixJ</name>
    <name type="ordered locus">RA0669</name>
    <name type="ORF">SMa1227</name>
</gene>
<reference key="1">
    <citation type="journal article" date="1988" name="Cell">
        <title>Cascade regulation of nif gene expression in Rhizobium meliloti.</title>
        <authorList>
            <person name="David M."/>
            <person name="Daveran M.-L."/>
            <person name="Batut J."/>
            <person name="Dedieu A."/>
            <person name="Domergue O."/>
            <person name="Ghai J."/>
            <person name="Hertig C."/>
            <person name="Boistard P."/>
            <person name="Kahn D."/>
        </authorList>
    </citation>
    <scope>NUCLEOTIDE SEQUENCE [GENOMIC DNA]</scope>
</reference>
<reference key="2">
    <citation type="journal article" date="2001" name="Proc. Natl. Acad. Sci. U.S.A.">
        <title>Nucleotide sequence and predicted functions of the entire Sinorhizobium meliloti pSymA megaplasmid.</title>
        <authorList>
            <person name="Barnett M.J."/>
            <person name="Fisher R.F."/>
            <person name="Jones T."/>
            <person name="Komp C."/>
            <person name="Abola A.P."/>
            <person name="Barloy-Hubler F."/>
            <person name="Bowser L."/>
            <person name="Capela D."/>
            <person name="Galibert F."/>
            <person name="Gouzy J."/>
            <person name="Gurjal M."/>
            <person name="Hong A."/>
            <person name="Huizar L."/>
            <person name="Hyman R.W."/>
            <person name="Kahn D."/>
            <person name="Kahn M.L."/>
            <person name="Kalman S."/>
            <person name="Keating D.H."/>
            <person name="Palm C."/>
            <person name="Peck M.C."/>
            <person name="Surzycki R."/>
            <person name="Wells D.H."/>
            <person name="Yeh K.-C."/>
            <person name="Davis R.W."/>
            <person name="Federspiel N.A."/>
            <person name="Long S.R."/>
        </authorList>
    </citation>
    <scope>NUCLEOTIDE SEQUENCE [LARGE SCALE GENOMIC DNA]</scope>
    <source>
        <strain>1021</strain>
    </source>
</reference>
<reference key="3">
    <citation type="journal article" date="2001" name="Science">
        <title>The composite genome of the legume symbiont Sinorhizobium meliloti.</title>
        <authorList>
            <person name="Galibert F."/>
            <person name="Finan T.M."/>
            <person name="Long S.R."/>
            <person name="Puehler A."/>
            <person name="Abola P."/>
            <person name="Ampe F."/>
            <person name="Barloy-Hubler F."/>
            <person name="Barnett M.J."/>
            <person name="Becker A."/>
            <person name="Boistard P."/>
            <person name="Bothe G."/>
            <person name="Boutry M."/>
            <person name="Bowser L."/>
            <person name="Buhrmester J."/>
            <person name="Cadieu E."/>
            <person name="Capela D."/>
            <person name="Chain P."/>
            <person name="Cowie A."/>
            <person name="Davis R.W."/>
            <person name="Dreano S."/>
            <person name="Federspiel N.A."/>
            <person name="Fisher R.F."/>
            <person name="Gloux S."/>
            <person name="Godrie T."/>
            <person name="Goffeau A."/>
            <person name="Golding B."/>
            <person name="Gouzy J."/>
            <person name="Gurjal M."/>
            <person name="Hernandez-Lucas I."/>
            <person name="Hong A."/>
            <person name="Huizar L."/>
            <person name="Hyman R.W."/>
            <person name="Jones T."/>
            <person name="Kahn D."/>
            <person name="Kahn M.L."/>
            <person name="Kalman S."/>
            <person name="Keating D.H."/>
            <person name="Kiss E."/>
            <person name="Komp C."/>
            <person name="Lelaure V."/>
            <person name="Masuy D."/>
            <person name="Palm C."/>
            <person name="Peck M.C."/>
            <person name="Pohl T.M."/>
            <person name="Portetelle D."/>
            <person name="Purnelle B."/>
            <person name="Ramsperger U."/>
            <person name="Surzycki R."/>
            <person name="Thebault P."/>
            <person name="Vandenbol M."/>
            <person name="Vorhoelter F.J."/>
            <person name="Weidner S."/>
            <person name="Wells D.H."/>
            <person name="Wong K."/>
            <person name="Yeh K.-C."/>
            <person name="Batut J."/>
        </authorList>
    </citation>
    <scope>NUCLEOTIDE SEQUENCE [LARGE SCALE GENOMIC DNA]</scope>
    <source>
        <strain>1021</strain>
    </source>
</reference>
<reference key="4">
    <citation type="journal article" date="1989" name="EMBO J.">
        <title>fixK, a gene homologous with fnr and crp from Escherichia coli, regulates nitrogen fixation genes both positively and negatively in Rhizobium meliloti.</title>
        <authorList>
            <person name="Batut J."/>
            <person name="Daveran-Mingot M.-L."/>
            <person name="David M."/>
            <person name="Jacobs J."/>
            <person name="Garnerone A.-M."/>
            <person name="Kahn D."/>
        </authorList>
    </citation>
    <scope>NUCLEOTIDE SEQUENCE [GENOMIC DNA] OF 200-204</scope>
</reference>
<reference key="5">
    <citation type="journal article" date="1991" name="Mol. Microbiol.">
        <title>Modular structure of FixJ: homology of the transcriptional activator domain with the -35 binding domain of sigma factors.</title>
        <authorList>
            <person name="Kahn D."/>
            <person name="Ditta G.S."/>
        </authorList>
    </citation>
    <scope>REVIEW</scope>
    <scope>MUTAGENESIS OF HTH REGION</scope>
</reference>
<reference key="6">
    <citation type="journal article" date="1999" name="Structure">
        <title>Structural transitions in the FixJ receiver domain.</title>
        <authorList>
            <person name="Gouet P."/>
            <person name="Fabry B."/>
            <person name="Guillet V."/>
            <person name="Birck C."/>
            <person name="Mourey L."/>
            <person name="Kahn D."/>
            <person name="Samama J.-P."/>
        </authorList>
    </citation>
    <scope>X-RAY CRYSTALLOGRAPHY (1.6 ANGSTROMS) OF 1-126</scope>
</reference>
<organism>
    <name type="scientific">Rhizobium meliloti (strain 1021)</name>
    <name type="common">Ensifer meliloti</name>
    <name type="synonym">Sinorhizobium meliloti</name>
    <dbReference type="NCBI Taxonomy" id="266834"/>
    <lineage>
        <taxon>Bacteria</taxon>
        <taxon>Pseudomonadati</taxon>
        <taxon>Pseudomonadota</taxon>
        <taxon>Alphaproteobacteria</taxon>
        <taxon>Hyphomicrobiales</taxon>
        <taxon>Rhizobiaceae</taxon>
        <taxon>Sinorhizobium/Ensifer group</taxon>
        <taxon>Sinorhizobium</taxon>
    </lineage>
</organism>
<name>FIXJ_RHIME</name>
<dbReference type="EMBL" id="Z21854">
    <property type="protein sequence ID" value="CAA79898.1"/>
    <property type="molecule type" value="Genomic_DNA"/>
</dbReference>
<dbReference type="EMBL" id="AE006469">
    <property type="protein sequence ID" value="AAK65327.1"/>
    <property type="molecule type" value="Genomic_DNA"/>
</dbReference>
<dbReference type="EMBL" id="X15079">
    <property type="protein sequence ID" value="CAA33182.1"/>
    <property type="molecule type" value="Genomic_DNA"/>
</dbReference>
<dbReference type="PIR" id="B31227">
    <property type="entry name" value="B31227"/>
</dbReference>
<dbReference type="PIR" id="E95345">
    <property type="entry name" value="E95345"/>
</dbReference>
<dbReference type="RefSeq" id="NP_435915.1">
    <property type="nucleotide sequence ID" value="NC_003037.1"/>
</dbReference>
<dbReference type="RefSeq" id="WP_010967648.1">
    <property type="nucleotide sequence ID" value="NC_003037.1"/>
</dbReference>
<dbReference type="PDB" id="1D5W">
    <property type="method" value="X-ray"/>
    <property type="resolution" value="2.30 A"/>
    <property type="chains" value="A/B/C=1-124"/>
</dbReference>
<dbReference type="PDB" id="1DBW">
    <property type="method" value="X-ray"/>
    <property type="resolution" value="1.60 A"/>
    <property type="chains" value="A/B=1-124"/>
</dbReference>
<dbReference type="PDB" id="1DCK">
    <property type="method" value="X-ray"/>
    <property type="resolution" value="2.00 A"/>
    <property type="chains" value="A/B=1-124"/>
</dbReference>
<dbReference type="PDB" id="1DCM">
    <property type="method" value="X-ray"/>
    <property type="resolution" value="3.00 A"/>
    <property type="chains" value="A/B=1-124"/>
</dbReference>
<dbReference type="PDB" id="1X3U">
    <property type="method" value="NMR"/>
    <property type="chains" value="A=130-204"/>
</dbReference>
<dbReference type="PDBsum" id="1D5W"/>
<dbReference type="PDBsum" id="1DBW"/>
<dbReference type="PDBsum" id="1DCK"/>
<dbReference type="PDBsum" id="1DCM"/>
<dbReference type="PDBsum" id="1X3U"/>
<dbReference type="SMR" id="P10958"/>
<dbReference type="EnsemblBacteria" id="AAK65327">
    <property type="protein sequence ID" value="AAK65327"/>
    <property type="gene ID" value="SMa1227"/>
</dbReference>
<dbReference type="GeneID" id="89572459"/>
<dbReference type="KEGG" id="sme:SMa1227"/>
<dbReference type="PATRIC" id="fig|266834.11.peg.689"/>
<dbReference type="HOGENOM" id="CLU_000445_90_4_5"/>
<dbReference type="OrthoDB" id="9782655at2"/>
<dbReference type="EvolutionaryTrace" id="P10958"/>
<dbReference type="PRO" id="PR:P10958"/>
<dbReference type="Proteomes" id="UP000001976">
    <property type="component" value="Plasmid pSymA"/>
</dbReference>
<dbReference type="CollecTF" id="EXPREG_00000900"/>
<dbReference type="GO" id="GO:0005737">
    <property type="term" value="C:cytoplasm"/>
    <property type="evidence" value="ECO:0007669"/>
    <property type="project" value="UniProtKB-SubCell"/>
</dbReference>
<dbReference type="GO" id="GO:0032993">
    <property type="term" value="C:protein-DNA complex"/>
    <property type="evidence" value="ECO:0000353"/>
    <property type="project" value="CollecTF"/>
</dbReference>
<dbReference type="GO" id="GO:0001216">
    <property type="term" value="F:DNA-binding transcription activator activity"/>
    <property type="evidence" value="ECO:0000353"/>
    <property type="project" value="CollecTF"/>
</dbReference>
<dbReference type="GO" id="GO:0046872">
    <property type="term" value="F:metal ion binding"/>
    <property type="evidence" value="ECO:0007669"/>
    <property type="project" value="UniProtKB-KW"/>
</dbReference>
<dbReference type="GO" id="GO:0000976">
    <property type="term" value="F:transcription cis-regulatory region binding"/>
    <property type="evidence" value="ECO:0000353"/>
    <property type="project" value="CollecTF"/>
</dbReference>
<dbReference type="GO" id="GO:0009399">
    <property type="term" value="P:nitrogen fixation"/>
    <property type="evidence" value="ECO:0007669"/>
    <property type="project" value="UniProtKB-KW"/>
</dbReference>
<dbReference type="GO" id="GO:0000160">
    <property type="term" value="P:phosphorelay signal transduction system"/>
    <property type="evidence" value="ECO:0007669"/>
    <property type="project" value="UniProtKB-KW"/>
</dbReference>
<dbReference type="GO" id="GO:0045893">
    <property type="term" value="P:positive regulation of DNA-templated transcription"/>
    <property type="evidence" value="ECO:0000270"/>
    <property type="project" value="CollecTF"/>
</dbReference>
<dbReference type="CDD" id="cd06170">
    <property type="entry name" value="LuxR_C_like"/>
    <property type="match status" value="1"/>
</dbReference>
<dbReference type="CDD" id="cd17537">
    <property type="entry name" value="REC_FixJ"/>
    <property type="match status" value="1"/>
</dbReference>
<dbReference type="FunFam" id="3.40.50.2300:FF:000018">
    <property type="entry name" value="DNA-binding transcriptional regulator NtrC"/>
    <property type="match status" value="1"/>
</dbReference>
<dbReference type="FunFam" id="1.10.10.10:FF:000876">
    <property type="entry name" value="Response regulator protein TodT"/>
    <property type="match status" value="1"/>
</dbReference>
<dbReference type="Gene3D" id="3.40.50.2300">
    <property type="match status" value="1"/>
</dbReference>
<dbReference type="Gene3D" id="1.10.10.10">
    <property type="entry name" value="Winged helix-like DNA-binding domain superfamily/Winged helix DNA-binding domain"/>
    <property type="match status" value="1"/>
</dbReference>
<dbReference type="InterPro" id="IPR011006">
    <property type="entry name" value="CheY-like_superfamily"/>
</dbReference>
<dbReference type="InterPro" id="IPR016032">
    <property type="entry name" value="Sig_transdc_resp-reg_C-effctor"/>
</dbReference>
<dbReference type="InterPro" id="IPR001789">
    <property type="entry name" value="Sig_transdc_resp-reg_receiver"/>
</dbReference>
<dbReference type="InterPro" id="IPR000792">
    <property type="entry name" value="Tscrpt_reg_LuxR_C"/>
</dbReference>
<dbReference type="InterPro" id="IPR036388">
    <property type="entry name" value="WH-like_DNA-bd_sf"/>
</dbReference>
<dbReference type="NCBIfam" id="NF006900">
    <property type="entry name" value="PRK09390.1"/>
    <property type="match status" value="1"/>
</dbReference>
<dbReference type="PANTHER" id="PTHR44688">
    <property type="entry name" value="DNA-BINDING TRANSCRIPTIONAL ACTIVATOR DEVR_DOSR"/>
    <property type="match status" value="1"/>
</dbReference>
<dbReference type="PANTHER" id="PTHR44688:SF16">
    <property type="entry name" value="DNA-BINDING TRANSCRIPTIONAL ACTIVATOR DEVR_DOSR"/>
    <property type="match status" value="1"/>
</dbReference>
<dbReference type="Pfam" id="PF00196">
    <property type="entry name" value="GerE"/>
    <property type="match status" value="1"/>
</dbReference>
<dbReference type="Pfam" id="PF00072">
    <property type="entry name" value="Response_reg"/>
    <property type="match status" value="1"/>
</dbReference>
<dbReference type="PRINTS" id="PR00038">
    <property type="entry name" value="HTHLUXR"/>
</dbReference>
<dbReference type="SMART" id="SM00421">
    <property type="entry name" value="HTH_LUXR"/>
    <property type="match status" value="1"/>
</dbReference>
<dbReference type="SMART" id="SM00448">
    <property type="entry name" value="REC"/>
    <property type="match status" value="1"/>
</dbReference>
<dbReference type="SUPFAM" id="SSF46894">
    <property type="entry name" value="C-terminal effector domain of the bipartite response regulators"/>
    <property type="match status" value="1"/>
</dbReference>
<dbReference type="SUPFAM" id="SSF52172">
    <property type="entry name" value="CheY-like"/>
    <property type="match status" value="1"/>
</dbReference>
<dbReference type="PROSITE" id="PS00622">
    <property type="entry name" value="HTH_LUXR_1"/>
    <property type="match status" value="1"/>
</dbReference>
<dbReference type="PROSITE" id="PS50043">
    <property type="entry name" value="HTH_LUXR_2"/>
    <property type="match status" value="1"/>
</dbReference>
<dbReference type="PROSITE" id="PS50110">
    <property type="entry name" value="RESPONSE_REGULATORY"/>
    <property type="match status" value="1"/>
</dbReference>
<geneLocation type="plasmid">
    <name>pSymA</name>
    <name>megaplasmid 1</name>
</geneLocation>
<feature type="chain" id="PRO_0000081102" description="Transcriptional regulatory protein FixJ">
    <location>
        <begin position="1"/>
        <end position="204"/>
    </location>
</feature>
<feature type="domain" description="Response regulatory" evidence="1">
    <location>
        <begin position="5"/>
        <end position="119"/>
    </location>
</feature>
<feature type="domain" description="HTH luxR-type" evidence="2">
    <location>
        <begin position="135"/>
        <end position="200"/>
    </location>
</feature>
<feature type="DNA-binding region" description="H-T-H motif" evidence="2">
    <location>
        <begin position="159"/>
        <end position="178"/>
    </location>
</feature>
<feature type="binding site">
    <location>
        <position position="10"/>
    </location>
    <ligand>
        <name>Mg(2+)</name>
        <dbReference type="ChEBI" id="CHEBI:18420"/>
    </ligand>
</feature>
<feature type="binding site">
    <location>
        <position position="11"/>
    </location>
    <ligand>
        <name>Mg(2+)</name>
        <dbReference type="ChEBI" id="CHEBI:18420"/>
    </ligand>
</feature>
<feature type="binding site">
    <location>
        <position position="54"/>
    </location>
    <ligand>
        <name>Mg(2+)</name>
        <dbReference type="ChEBI" id="CHEBI:18420"/>
    </ligand>
</feature>
<feature type="binding site">
    <location>
        <position position="56"/>
    </location>
    <ligand>
        <name>Mg(2+)</name>
        <dbReference type="ChEBI" id="CHEBI:18420"/>
    </ligand>
</feature>
<feature type="modified residue" description="4-aspartylphosphate" evidence="1">
    <location>
        <position position="54"/>
    </location>
</feature>
<feature type="strand" evidence="4">
    <location>
        <begin position="5"/>
        <end position="12"/>
    </location>
</feature>
<feature type="helix" evidence="4">
    <location>
        <begin position="13"/>
        <end position="25"/>
    </location>
</feature>
<feature type="strand" evidence="4">
    <location>
        <begin position="29"/>
        <end position="34"/>
    </location>
</feature>
<feature type="helix" evidence="4">
    <location>
        <begin position="36"/>
        <end position="42"/>
    </location>
</feature>
<feature type="helix" evidence="4">
    <location>
        <begin position="43"/>
        <end position="45"/>
    </location>
</feature>
<feature type="strand" evidence="4">
    <location>
        <begin position="48"/>
        <end position="54"/>
    </location>
</feature>
<feature type="strand" evidence="5">
    <location>
        <begin position="58"/>
        <end position="60"/>
    </location>
</feature>
<feature type="helix" evidence="4">
    <location>
        <begin position="62"/>
        <end position="71"/>
    </location>
</feature>
<feature type="strand" evidence="4">
    <location>
        <begin position="78"/>
        <end position="82"/>
    </location>
</feature>
<feature type="helix" evidence="4">
    <location>
        <begin position="87"/>
        <end position="95"/>
    </location>
</feature>
<feature type="strand" evidence="4">
    <location>
        <begin position="99"/>
        <end position="105"/>
    </location>
</feature>
<feature type="helix" evidence="4">
    <location>
        <begin position="108"/>
        <end position="119"/>
    </location>
</feature>
<feature type="helix" evidence="6">
    <location>
        <begin position="133"/>
        <end position="142"/>
    </location>
</feature>
<feature type="helix" evidence="6">
    <location>
        <begin position="144"/>
        <end position="153"/>
    </location>
</feature>
<feature type="turn" evidence="6">
    <location>
        <begin position="154"/>
        <end position="156"/>
    </location>
</feature>
<feature type="helix" evidence="6">
    <location>
        <begin position="159"/>
        <end position="165"/>
    </location>
</feature>
<feature type="helix" evidence="6">
    <location>
        <begin position="170"/>
        <end position="183"/>
    </location>
</feature>
<feature type="helix" evidence="6">
    <location>
        <begin position="189"/>
        <end position="199"/>
    </location>
</feature>
<proteinExistence type="evidence at protein level"/>
<sequence>MTDYTVHIVDDEEPVRKSLAFMLTMNGFAVKMHQSAEAFLAFAPDVRNGVLVTDLRMPDMSGVELLRNLGDLKINIPSIVITGHGDVPMAVEAMKAGAVDFIEKPFEDTVIIEAIERASEHLVAAEADVDDANDIRARLQTLSERERQVLSAVVAGLPNKSIAYDLDISPRTVEVHRANVMAKMKAKSLPHLVRMALAGGFGPS</sequence>
<accession>P10958</accession>
<evidence type="ECO:0000255" key="1">
    <source>
        <dbReference type="PROSITE-ProRule" id="PRU00169"/>
    </source>
</evidence>
<evidence type="ECO:0000255" key="2">
    <source>
        <dbReference type="PROSITE-ProRule" id="PRU00411"/>
    </source>
</evidence>
<evidence type="ECO:0000305" key="3"/>
<evidence type="ECO:0007829" key="4">
    <source>
        <dbReference type="PDB" id="1DBW"/>
    </source>
</evidence>
<evidence type="ECO:0007829" key="5">
    <source>
        <dbReference type="PDB" id="1DCK"/>
    </source>
</evidence>
<evidence type="ECO:0007829" key="6">
    <source>
        <dbReference type="PDB" id="1X3U"/>
    </source>
</evidence>
<protein>
    <recommendedName>
        <fullName>Transcriptional regulatory protein FixJ</fullName>
    </recommendedName>
</protein>